<name>ATPG_YERPB</name>
<proteinExistence type="inferred from homology"/>
<sequence length="287" mass="31578">MAGAKEIRSKIASVQNTQKITKAMEMVAASKMRKSQERMAASRPYAETMRSVIGHLALGNLEYKHPYLEERDVKRVGYLVVSTDRGLCGGLNINLFKRLLAEMKGWSEKGVECDLALIGSKAASFFGSVGGKIVAQVTGMGDNPSLSELIGPVKVMLQAYDEGRLDKLYIVNNKFINTMSQEPRIMQLLPLPPAEDGELKKKSWDYLYEPDPKALLDTLLRRYVESQVYQGVVENLASEQAARMVAMKAATDNGGSLIKELQLVYNKARQASITQELTEIVGGASAV</sequence>
<reference key="1">
    <citation type="submission" date="2008-04" db="EMBL/GenBank/DDBJ databases">
        <title>Complete sequence of Yersinia pseudotuberculosis PB1/+.</title>
        <authorList>
            <person name="Copeland A."/>
            <person name="Lucas S."/>
            <person name="Lapidus A."/>
            <person name="Glavina del Rio T."/>
            <person name="Dalin E."/>
            <person name="Tice H."/>
            <person name="Bruce D."/>
            <person name="Goodwin L."/>
            <person name="Pitluck S."/>
            <person name="Munk A.C."/>
            <person name="Brettin T."/>
            <person name="Detter J.C."/>
            <person name="Han C."/>
            <person name="Tapia R."/>
            <person name="Schmutz J."/>
            <person name="Larimer F."/>
            <person name="Land M."/>
            <person name="Hauser L."/>
            <person name="Challacombe J.F."/>
            <person name="Green L."/>
            <person name="Lindler L.E."/>
            <person name="Nikolich M.P."/>
            <person name="Richardson P."/>
        </authorList>
    </citation>
    <scope>NUCLEOTIDE SEQUENCE [LARGE SCALE GENOMIC DNA]</scope>
    <source>
        <strain>PB1/+</strain>
    </source>
</reference>
<accession>B2K846</accession>
<gene>
    <name evidence="1" type="primary">atpG</name>
    <name type="ordered locus">YPTS_4179</name>
</gene>
<feature type="chain" id="PRO_1000134226" description="ATP synthase gamma chain">
    <location>
        <begin position="1"/>
        <end position="287"/>
    </location>
</feature>
<organism>
    <name type="scientific">Yersinia pseudotuberculosis serotype IB (strain PB1/+)</name>
    <dbReference type="NCBI Taxonomy" id="502801"/>
    <lineage>
        <taxon>Bacteria</taxon>
        <taxon>Pseudomonadati</taxon>
        <taxon>Pseudomonadota</taxon>
        <taxon>Gammaproteobacteria</taxon>
        <taxon>Enterobacterales</taxon>
        <taxon>Yersiniaceae</taxon>
        <taxon>Yersinia</taxon>
    </lineage>
</organism>
<protein>
    <recommendedName>
        <fullName evidence="1">ATP synthase gamma chain</fullName>
    </recommendedName>
    <alternativeName>
        <fullName evidence="1">ATP synthase F1 sector gamma subunit</fullName>
    </alternativeName>
    <alternativeName>
        <fullName evidence="1">F-ATPase gamma subunit</fullName>
    </alternativeName>
</protein>
<comment type="function">
    <text evidence="1">Produces ATP from ADP in the presence of a proton gradient across the membrane. The gamma chain is believed to be important in regulating ATPase activity and the flow of protons through the CF(0) complex.</text>
</comment>
<comment type="subunit">
    <text evidence="1">F-type ATPases have 2 components, CF(1) - the catalytic core - and CF(0) - the membrane proton channel. CF(1) has five subunits: alpha(3), beta(3), gamma(1), delta(1), epsilon(1). CF(0) has three main subunits: a, b and c.</text>
</comment>
<comment type="subcellular location">
    <subcellularLocation>
        <location evidence="1">Cell inner membrane</location>
        <topology evidence="1">Peripheral membrane protein</topology>
    </subcellularLocation>
</comment>
<comment type="similarity">
    <text evidence="1">Belongs to the ATPase gamma chain family.</text>
</comment>
<keyword id="KW-0066">ATP synthesis</keyword>
<keyword id="KW-0997">Cell inner membrane</keyword>
<keyword id="KW-1003">Cell membrane</keyword>
<keyword id="KW-0139">CF(1)</keyword>
<keyword id="KW-0375">Hydrogen ion transport</keyword>
<keyword id="KW-0406">Ion transport</keyword>
<keyword id="KW-0472">Membrane</keyword>
<keyword id="KW-0813">Transport</keyword>
<dbReference type="EMBL" id="CP001048">
    <property type="protein sequence ID" value="ACC91122.1"/>
    <property type="molecule type" value="Genomic_DNA"/>
</dbReference>
<dbReference type="RefSeq" id="WP_002220756.1">
    <property type="nucleotide sequence ID" value="NZ_CP009780.1"/>
</dbReference>
<dbReference type="SMR" id="B2K846"/>
<dbReference type="GeneID" id="96663460"/>
<dbReference type="KEGG" id="ypb:YPTS_4179"/>
<dbReference type="PATRIC" id="fig|502801.10.peg.3650"/>
<dbReference type="GO" id="GO:0005886">
    <property type="term" value="C:plasma membrane"/>
    <property type="evidence" value="ECO:0007669"/>
    <property type="project" value="UniProtKB-SubCell"/>
</dbReference>
<dbReference type="GO" id="GO:0045259">
    <property type="term" value="C:proton-transporting ATP synthase complex"/>
    <property type="evidence" value="ECO:0007669"/>
    <property type="project" value="UniProtKB-KW"/>
</dbReference>
<dbReference type="GO" id="GO:0005524">
    <property type="term" value="F:ATP binding"/>
    <property type="evidence" value="ECO:0007669"/>
    <property type="project" value="UniProtKB-UniRule"/>
</dbReference>
<dbReference type="GO" id="GO:0046933">
    <property type="term" value="F:proton-transporting ATP synthase activity, rotational mechanism"/>
    <property type="evidence" value="ECO:0007669"/>
    <property type="project" value="UniProtKB-UniRule"/>
</dbReference>
<dbReference type="GO" id="GO:0042777">
    <property type="term" value="P:proton motive force-driven plasma membrane ATP synthesis"/>
    <property type="evidence" value="ECO:0007669"/>
    <property type="project" value="UniProtKB-UniRule"/>
</dbReference>
<dbReference type="CDD" id="cd12151">
    <property type="entry name" value="F1-ATPase_gamma"/>
    <property type="match status" value="1"/>
</dbReference>
<dbReference type="FunFam" id="1.10.287.80:FF:000005">
    <property type="entry name" value="ATP synthase gamma chain"/>
    <property type="match status" value="2"/>
</dbReference>
<dbReference type="FunFam" id="3.40.1380.10:FF:000001">
    <property type="entry name" value="ATP synthase gamma chain"/>
    <property type="match status" value="1"/>
</dbReference>
<dbReference type="Gene3D" id="3.40.1380.10">
    <property type="match status" value="1"/>
</dbReference>
<dbReference type="Gene3D" id="1.10.287.80">
    <property type="entry name" value="ATP synthase, gamma subunit, helix hairpin domain"/>
    <property type="match status" value="1"/>
</dbReference>
<dbReference type="HAMAP" id="MF_00815">
    <property type="entry name" value="ATP_synth_gamma_bact"/>
    <property type="match status" value="1"/>
</dbReference>
<dbReference type="InterPro" id="IPR035968">
    <property type="entry name" value="ATP_synth_F1_ATPase_gsu"/>
</dbReference>
<dbReference type="InterPro" id="IPR000131">
    <property type="entry name" value="ATP_synth_F1_gsu"/>
</dbReference>
<dbReference type="InterPro" id="IPR023632">
    <property type="entry name" value="ATP_synth_F1_gsu_CS"/>
</dbReference>
<dbReference type="NCBIfam" id="TIGR01146">
    <property type="entry name" value="ATPsyn_F1gamma"/>
    <property type="match status" value="1"/>
</dbReference>
<dbReference type="NCBIfam" id="NF004144">
    <property type="entry name" value="PRK05621.1-1"/>
    <property type="match status" value="1"/>
</dbReference>
<dbReference type="PANTHER" id="PTHR11693">
    <property type="entry name" value="ATP SYNTHASE GAMMA CHAIN"/>
    <property type="match status" value="1"/>
</dbReference>
<dbReference type="PANTHER" id="PTHR11693:SF22">
    <property type="entry name" value="ATP SYNTHASE SUBUNIT GAMMA, MITOCHONDRIAL"/>
    <property type="match status" value="1"/>
</dbReference>
<dbReference type="Pfam" id="PF00231">
    <property type="entry name" value="ATP-synt"/>
    <property type="match status" value="1"/>
</dbReference>
<dbReference type="PRINTS" id="PR00126">
    <property type="entry name" value="ATPASEGAMMA"/>
</dbReference>
<dbReference type="SUPFAM" id="SSF52943">
    <property type="entry name" value="ATP synthase (F1-ATPase), gamma subunit"/>
    <property type="match status" value="1"/>
</dbReference>
<dbReference type="PROSITE" id="PS00153">
    <property type="entry name" value="ATPASE_GAMMA"/>
    <property type="match status" value="1"/>
</dbReference>
<evidence type="ECO:0000255" key="1">
    <source>
        <dbReference type="HAMAP-Rule" id="MF_00815"/>
    </source>
</evidence>